<protein>
    <recommendedName>
        <fullName>rRNA-processing protein FYV7</fullName>
    </recommendedName>
</protein>
<sequence>MAEFGRNKKSNGKKFTKEYKVKAIQQNITRKARLKKEYLKALKEEGYAVPEKETSRREVNVKKLKEDKRLEGKKKIDEKKELKKQRKREQREKLEERRRKEEEKVKIIRQKEQEREQKRRKMTKRTRSGQPLMAPKIEDLLSKIKNDDTYTL</sequence>
<comment type="function">
    <text evidence="1">Involved in the processing of the 20S pre-rRNA.</text>
</comment>
<comment type="subcellular location">
    <subcellularLocation>
        <location evidence="1">Nucleus</location>
        <location evidence="1">Nucleolus</location>
    </subcellularLocation>
</comment>
<comment type="similarity">
    <text evidence="4">Belongs to the FYV7 family.</text>
</comment>
<organism>
    <name type="scientific">Candida glabrata (strain ATCC 2001 / BCRC 20586 / JCM 3761 / NBRC 0622 / NRRL Y-65 / CBS 138)</name>
    <name type="common">Yeast</name>
    <name type="synonym">Nakaseomyces glabratus</name>
    <dbReference type="NCBI Taxonomy" id="284593"/>
    <lineage>
        <taxon>Eukaryota</taxon>
        <taxon>Fungi</taxon>
        <taxon>Dikarya</taxon>
        <taxon>Ascomycota</taxon>
        <taxon>Saccharomycotina</taxon>
        <taxon>Saccharomycetes</taxon>
        <taxon>Saccharomycetales</taxon>
        <taxon>Saccharomycetaceae</taxon>
        <taxon>Nakaseomyces</taxon>
    </lineage>
</organism>
<proteinExistence type="inferred from homology"/>
<dbReference type="EMBL" id="CR380952">
    <property type="protein sequence ID" value="CAG58963.1"/>
    <property type="molecule type" value="Genomic_DNA"/>
</dbReference>
<dbReference type="RefSeq" id="XP_446039.1">
    <property type="nucleotide sequence ID" value="XM_446039.1"/>
</dbReference>
<dbReference type="SMR" id="Q6FUQ5"/>
<dbReference type="FunCoup" id="Q6FUQ5">
    <property type="interactions" value="115"/>
</dbReference>
<dbReference type="STRING" id="284593.Q6FUQ5"/>
<dbReference type="EnsemblFungi" id="CAGL0F01551g-T">
    <property type="protein sequence ID" value="CAGL0F01551g-T-p1"/>
    <property type="gene ID" value="CAGL0F01551g"/>
</dbReference>
<dbReference type="KEGG" id="cgr:2887922"/>
<dbReference type="CGD" id="CAL0129721">
    <property type="gene designation" value="CAGL0F01551g"/>
</dbReference>
<dbReference type="VEuPathDB" id="FungiDB:B1J91_F01551g"/>
<dbReference type="VEuPathDB" id="FungiDB:CAGL0F01551g"/>
<dbReference type="eggNOG" id="KOG4851">
    <property type="taxonomic scope" value="Eukaryota"/>
</dbReference>
<dbReference type="HOGENOM" id="CLU_105541_0_0_1"/>
<dbReference type="InParanoid" id="Q6FUQ5"/>
<dbReference type="OMA" id="MGPKIDD"/>
<dbReference type="Proteomes" id="UP000002428">
    <property type="component" value="Chromosome F"/>
</dbReference>
<dbReference type="GO" id="GO:0005730">
    <property type="term" value="C:nucleolus"/>
    <property type="evidence" value="ECO:0007669"/>
    <property type="project" value="UniProtKB-SubCell"/>
</dbReference>
<dbReference type="GO" id="GO:0032040">
    <property type="term" value="C:small-subunit processome"/>
    <property type="evidence" value="ECO:0007669"/>
    <property type="project" value="EnsemblFungi"/>
</dbReference>
<dbReference type="GO" id="GO:0000462">
    <property type="term" value="P:maturation of SSU-rRNA from tricistronic rRNA transcript (SSU-rRNA, 5.8S rRNA, LSU-rRNA)"/>
    <property type="evidence" value="ECO:0007669"/>
    <property type="project" value="EnsemblFungi"/>
</dbReference>
<dbReference type="InterPro" id="IPR013730">
    <property type="entry name" value="Fyv7/TAP26"/>
</dbReference>
<dbReference type="InterPro" id="IPR017265">
    <property type="entry name" value="Fyv7_fungi"/>
</dbReference>
<dbReference type="Pfam" id="PF08524">
    <property type="entry name" value="rRNA_processing"/>
    <property type="match status" value="1"/>
</dbReference>
<dbReference type="PIRSF" id="PIRSF037708">
    <property type="entry name" value="rRNA_proc_FYV7"/>
    <property type="match status" value="1"/>
</dbReference>
<gene>
    <name type="primary">FYV7</name>
    <name type="ordered locus">CAGL0F01551g</name>
</gene>
<keyword id="KW-0175">Coiled coil</keyword>
<keyword id="KW-0539">Nucleus</keyword>
<keyword id="KW-1185">Reference proteome</keyword>
<keyword id="KW-0698">rRNA processing</keyword>
<feature type="chain" id="PRO_0000087400" description="rRNA-processing protein FYV7">
    <location>
        <begin position="1"/>
        <end position="152"/>
    </location>
</feature>
<feature type="region of interest" description="Disordered" evidence="3">
    <location>
        <begin position="66"/>
        <end position="152"/>
    </location>
</feature>
<feature type="coiled-coil region" evidence="2">
    <location>
        <begin position="71"/>
        <end position="122"/>
    </location>
</feature>
<feature type="compositionally biased region" description="Basic and acidic residues" evidence="3">
    <location>
        <begin position="66"/>
        <end position="81"/>
    </location>
</feature>
<feature type="compositionally biased region" description="Basic and acidic residues" evidence="3">
    <location>
        <begin position="89"/>
        <end position="117"/>
    </location>
</feature>
<feature type="compositionally biased region" description="Basic residues" evidence="3">
    <location>
        <begin position="118"/>
        <end position="127"/>
    </location>
</feature>
<feature type="compositionally biased region" description="Basic and acidic residues" evidence="3">
    <location>
        <begin position="136"/>
        <end position="152"/>
    </location>
</feature>
<accession>Q6FUQ5</accession>
<name>FYV7_CANGA</name>
<evidence type="ECO:0000250" key="1"/>
<evidence type="ECO:0000255" key="2"/>
<evidence type="ECO:0000256" key="3">
    <source>
        <dbReference type="SAM" id="MobiDB-lite"/>
    </source>
</evidence>
<evidence type="ECO:0000305" key="4"/>
<reference key="1">
    <citation type="journal article" date="2004" name="Nature">
        <title>Genome evolution in yeasts.</title>
        <authorList>
            <person name="Dujon B."/>
            <person name="Sherman D."/>
            <person name="Fischer G."/>
            <person name="Durrens P."/>
            <person name="Casaregola S."/>
            <person name="Lafontaine I."/>
            <person name="de Montigny J."/>
            <person name="Marck C."/>
            <person name="Neuveglise C."/>
            <person name="Talla E."/>
            <person name="Goffard N."/>
            <person name="Frangeul L."/>
            <person name="Aigle M."/>
            <person name="Anthouard V."/>
            <person name="Babour A."/>
            <person name="Barbe V."/>
            <person name="Barnay S."/>
            <person name="Blanchin S."/>
            <person name="Beckerich J.-M."/>
            <person name="Beyne E."/>
            <person name="Bleykasten C."/>
            <person name="Boisrame A."/>
            <person name="Boyer J."/>
            <person name="Cattolico L."/>
            <person name="Confanioleri F."/>
            <person name="de Daruvar A."/>
            <person name="Despons L."/>
            <person name="Fabre E."/>
            <person name="Fairhead C."/>
            <person name="Ferry-Dumazet H."/>
            <person name="Groppi A."/>
            <person name="Hantraye F."/>
            <person name="Hennequin C."/>
            <person name="Jauniaux N."/>
            <person name="Joyet P."/>
            <person name="Kachouri R."/>
            <person name="Kerrest A."/>
            <person name="Koszul R."/>
            <person name="Lemaire M."/>
            <person name="Lesur I."/>
            <person name="Ma L."/>
            <person name="Muller H."/>
            <person name="Nicaud J.-M."/>
            <person name="Nikolski M."/>
            <person name="Oztas S."/>
            <person name="Ozier-Kalogeropoulos O."/>
            <person name="Pellenz S."/>
            <person name="Potier S."/>
            <person name="Richard G.-F."/>
            <person name="Straub M.-L."/>
            <person name="Suleau A."/>
            <person name="Swennen D."/>
            <person name="Tekaia F."/>
            <person name="Wesolowski-Louvel M."/>
            <person name="Westhof E."/>
            <person name="Wirth B."/>
            <person name="Zeniou-Meyer M."/>
            <person name="Zivanovic Y."/>
            <person name="Bolotin-Fukuhara M."/>
            <person name="Thierry A."/>
            <person name="Bouchier C."/>
            <person name="Caudron B."/>
            <person name="Scarpelli C."/>
            <person name="Gaillardin C."/>
            <person name="Weissenbach J."/>
            <person name="Wincker P."/>
            <person name="Souciet J.-L."/>
        </authorList>
    </citation>
    <scope>NUCLEOTIDE SEQUENCE [LARGE SCALE GENOMIC DNA]</scope>
    <source>
        <strain>ATCC 2001 / BCRC 20586 / JCM 3761 / NBRC 0622 / NRRL Y-65 / CBS 138</strain>
    </source>
</reference>